<feature type="chain" id="PRO_0000410076" description="Eukaryotic translation initiation factor 3 subunit B">
    <location>
        <begin position="1"/>
        <end position="753"/>
    </location>
</feature>
<feature type="domain" description="RRM" evidence="1">
    <location>
        <begin position="42"/>
        <end position="129"/>
    </location>
</feature>
<feature type="repeat" description="WD 1">
    <location>
        <begin position="142"/>
        <end position="185"/>
    </location>
</feature>
<feature type="repeat" description="WD 2">
    <location>
        <begin position="203"/>
        <end position="241"/>
    </location>
</feature>
<feature type="repeat" description="WD 3">
    <location>
        <begin position="321"/>
        <end position="362"/>
    </location>
</feature>
<feature type="repeat" description="WD 4">
    <location>
        <begin position="537"/>
        <end position="580"/>
    </location>
</feature>
<feature type="repeat" description="WD 5">
    <location>
        <begin position="595"/>
        <end position="640"/>
    </location>
</feature>
<feature type="coiled-coil region" evidence="1">
    <location>
        <begin position="723"/>
        <end position="753"/>
    </location>
</feature>
<protein>
    <recommendedName>
        <fullName evidence="1">Eukaryotic translation initiation factor 3 subunit B</fullName>
        <shortName evidence="1">eIF3b</shortName>
    </recommendedName>
    <alternativeName>
        <fullName evidence="1">Eukaryotic translation initiation factor 3 90 kDa subunit homolog</fullName>
        <shortName evidence="1">eIF3 p90</shortName>
    </alternativeName>
    <alternativeName>
        <fullName>Translation initiation factor eIF3 p90 subunit homolog</fullName>
    </alternativeName>
</protein>
<evidence type="ECO:0000255" key="1">
    <source>
        <dbReference type="HAMAP-Rule" id="MF_03001"/>
    </source>
</evidence>
<accession>P0CN45</accession>
<accession>Q55UP4</accession>
<accession>Q5KHP8</accession>
<accession>Q8J0V9</accession>
<proteinExistence type="inferred from homology"/>
<gene>
    <name evidence="1" type="primary">PRT1</name>
    <name type="ordered locus">CNBD0640</name>
</gene>
<reference key="1">
    <citation type="journal article" date="2005" name="Science">
        <title>The genome of the basidiomycetous yeast and human pathogen Cryptococcus neoformans.</title>
        <authorList>
            <person name="Loftus B.J."/>
            <person name="Fung E."/>
            <person name="Roncaglia P."/>
            <person name="Rowley D."/>
            <person name="Amedeo P."/>
            <person name="Bruno D."/>
            <person name="Vamathevan J."/>
            <person name="Miranda M."/>
            <person name="Anderson I.J."/>
            <person name="Fraser J.A."/>
            <person name="Allen J.E."/>
            <person name="Bosdet I.E."/>
            <person name="Brent M.R."/>
            <person name="Chiu R."/>
            <person name="Doering T.L."/>
            <person name="Donlin M.J."/>
            <person name="D'Souza C.A."/>
            <person name="Fox D.S."/>
            <person name="Grinberg V."/>
            <person name="Fu J."/>
            <person name="Fukushima M."/>
            <person name="Haas B.J."/>
            <person name="Huang J.C."/>
            <person name="Janbon G."/>
            <person name="Jones S.J.M."/>
            <person name="Koo H.L."/>
            <person name="Krzywinski M.I."/>
            <person name="Kwon-Chung K.J."/>
            <person name="Lengeler K.B."/>
            <person name="Maiti R."/>
            <person name="Marra M.A."/>
            <person name="Marra R.E."/>
            <person name="Mathewson C.A."/>
            <person name="Mitchell T.G."/>
            <person name="Pertea M."/>
            <person name="Riggs F.R."/>
            <person name="Salzberg S.L."/>
            <person name="Schein J.E."/>
            <person name="Shvartsbeyn A."/>
            <person name="Shin H."/>
            <person name="Shumway M."/>
            <person name="Specht C.A."/>
            <person name="Suh B.B."/>
            <person name="Tenney A."/>
            <person name="Utterback T.R."/>
            <person name="Wickes B.L."/>
            <person name="Wortman J.R."/>
            <person name="Wye N.H."/>
            <person name="Kronstad J.W."/>
            <person name="Lodge J.K."/>
            <person name="Heitman J."/>
            <person name="Davis R.W."/>
            <person name="Fraser C.M."/>
            <person name="Hyman R.W."/>
        </authorList>
    </citation>
    <scope>NUCLEOTIDE SEQUENCE [LARGE SCALE GENOMIC DNA]</scope>
    <source>
        <strain>B-3501A</strain>
    </source>
</reference>
<keyword id="KW-0175">Coiled coil</keyword>
<keyword id="KW-0963">Cytoplasm</keyword>
<keyword id="KW-0396">Initiation factor</keyword>
<keyword id="KW-0648">Protein biosynthesis</keyword>
<keyword id="KW-0677">Repeat</keyword>
<keyword id="KW-0694">RNA-binding</keyword>
<keyword id="KW-0853">WD repeat</keyword>
<organism>
    <name type="scientific">Cryptococcus neoformans var. neoformans serotype D (strain B-3501A)</name>
    <name type="common">Filobasidiella neoformans</name>
    <dbReference type="NCBI Taxonomy" id="283643"/>
    <lineage>
        <taxon>Eukaryota</taxon>
        <taxon>Fungi</taxon>
        <taxon>Dikarya</taxon>
        <taxon>Basidiomycota</taxon>
        <taxon>Agaricomycotina</taxon>
        <taxon>Tremellomycetes</taxon>
        <taxon>Tremellales</taxon>
        <taxon>Cryptococcaceae</taxon>
        <taxon>Cryptococcus</taxon>
        <taxon>Cryptococcus neoformans species complex</taxon>
    </lineage>
</organism>
<sequence>MSAADLDYFSEDEQREIEAELDTGFKDIEEKYAVTAQKGFETMLVVDNIPIVDGSKKQRLLERLRQTFAKVGAPIEEESIDMPWNAAAGTNKGFVFLTYPDVKEAENAVHTLDGVSFGKNVLHVNRFGDIQRFASMPVGEGDLPSGWKEKEYIEKDYLRNWLGDIAGRDQYVTFWETEVTVWWNGRNGTAEALKGPDGKPVKNSKWGELYLQWSTMGTYLASLHRVGVALWSGPKLDGPIGVNVLRFTHPNVRLIQFSPCENYLVTWSEDPLPNYENHPNAALRDTFGPEDEGNQYVIWDIKTTRVLRTFPGDKSAIGVDDTQSRMSWPTFKWSADDSYIAKCNVGAGISVYELPTMGLLDRKSIKIEGVQDFEWCPMSQKDLIARQEGKGKECVLAFWTPEAQNQPARVNIMAVPSRTILRSKNLFNVSECKFYWQSQGDFLCVKVDRHARKAKSKKATSCNLEIFRMREKDYPVEVLEFKDYVPQFAWEPSGTRFAIVLQAETNLPSVSGASTKYSIDFYQLDSKKGDFIAIKHLDSKMANTLVWSPKGRHIALATIGSSSKYDIEFWDLDFTIDERREAAELGANVTMLGTGEHYGITEIAWDPSGRYIATSASTWRQSPEPGFSIWDFKGQQLLHESRDRFKQFLWRPRPPTLLSKDQIKKVRKELREYSRQFDEEDAAEENRGSAEKLAQRRREIGEWNAWRTRNNDRLAFERENRGKSKAKIDVKGQEARVEEWVEELIDETEELSM</sequence>
<dbReference type="EMBL" id="AAEY01000019">
    <property type="protein sequence ID" value="EAL21368.1"/>
    <property type="molecule type" value="Genomic_DNA"/>
</dbReference>
<dbReference type="RefSeq" id="XP_776015.1">
    <property type="nucleotide sequence ID" value="XM_770922.1"/>
</dbReference>
<dbReference type="SMR" id="P0CN45"/>
<dbReference type="EnsemblFungi" id="AAW43191">
    <property type="protein sequence ID" value="AAW43191"/>
    <property type="gene ID" value="CND05740"/>
</dbReference>
<dbReference type="GeneID" id="4935453"/>
<dbReference type="KEGG" id="cnb:CNBD0640"/>
<dbReference type="VEuPathDB" id="FungiDB:CNBD0640"/>
<dbReference type="HOGENOM" id="CLU_011152_4_0_1"/>
<dbReference type="OrthoDB" id="318at5206"/>
<dbReference type="GO" id="GO:0010494">
    <property type="term" value="C:cytoplasmic stress granule"/>
    <property type="evidence" value="ECO:0007669"/>
    <property type="project" value="EnsemblFungi"/>
</dbReference>
<dbReference type="GO" id="GO:0016282">
    <property type="term" value="C:eukaryotic 43S preinitiation complex"/>
    <property type="evidence" value="ECO:0007669"/>
    <property type="project" value="UniProtKB-UniRule"/>
</dbReference>
<dbReference type="GO" id="GO:0033290">
    <property type="term" value="C:eukaryotic 48S preinitiation complex"/>
    <property type="evidence" value="ECO:0007669"/>
    <property type="project" value="UniProtKB-UniRule"/>
</dbReference>
<dbReference type="GO" id="GO:0071540">
    <property type="term" value="C:eukaryotic translation initiation factor 3 complex, eIF3e"/>
    <property type="evidence" value="ECO:0007669"/>
    <property type="project" value="EnsemblFungi"/>
</dbReference>
<dbReference type="GO" id="GO:0071541">
    <property type="term" value="C:eukaryotic translation initiation factor 3 complex, eIF3m"/>
    <property type="evidence" value="ECO:0007669"/>
    <property type="project" value="EnsemblFungi"/>
</dbReference>
<dbReference type="GO" id="GO:0003723">
    <property type="term" value="F:RNA binding"/>
    <property type="evidence" value="ECO:0007669"/>
    <property type="project" value="UniProtKB-UniRule"/>
</dbReference>
<dbReference type="GO" id="GO:0003743">
    <property type="term" value="F:translation initiation factor activity"/>
    <property type="evidence" value="ECO:0007669"/>
    <property type="project" value="UniProtKB-UniRule"/>
</dbReference>
<dbReference type="GO" id="GO:0031369">
    <property type="term" value="F:translation initiation factor binding"/>
    <property type="evidence" value="ECO:0007669"/>
    <property type="project" value="InterPro"/>
</dbReference>
<dbReference type="GO" id="GO:0001732">
    <property type="term" value="P:formation of cytoplasmic translation initiation complex"/>
    <property type="evidence" value="ECO:0007669"/>
    <property type="project" value="UniProtKB-UniRule"/>
</dbReference>
<dbReference type="FunFam" id="2.130.10.10:FF:000764">
    <property type="entry name" value="Eukaryotic translation initiation factor 3 subunit B"/>
    <property type="match status" value="1"/>
</dbReference>
<dbReference type="FunFam" id="2.130.10.10:FF:001138">
    <property type="entry name" value="Eukaryotic translation initiation factor 3 subunit B"/>
    <property type="match status" value="1"/>
</dbReference>
<dbReference type="Gene3D" id="3.30.70.330">
    <property type="match status" value="1"/>
</dbReference>
<dbReference type="Gene3D" id="2.130.10.10">
    <property type="entry name" value="YVTN repeat-like/Quinoprotein amine dehydrogenase"/>
    <property type="match status" value="2"/>
</dbReference>
<dbReference type="HAMAP" id="MF_03001">
    <property type="entry name" value="eIF3b"/>
    <property type="match status" value="1"/>
</dbReference>
<dbReference type="InterPro" id="IPR011400">
    <property type="entry name" value="EIF3B"/>
</dbReference>
<dbReference type="InterPro" id="IPR012677">
    <property type="entry name" value="Nucleotide-bd_a/b_plait_sf"/>
</dbReference>
<dbReference type="InterPro" id="IPR035979">
    <property type="entry name" value="RBD_domain_sf"/>
</dbReference>
<dbReference type="InterPro" id="IPR000504">
    <property type="entry name" value="RRM_dom"/>
</dbReference>
<dbReference type="InterPro" id="IPR013979">
    <property type="entry name" value="TIF_beta_prop-like"/>
</dbReference>
<dbReference type="InterPro" id="IPR015943">
    <property type="entry name" value="WD40/YVTN_repeat-like_dom_sf"/>
</dbReference>
<dbReference type="PANTHER" id="PTHR14068">
    <property type="entry name" value="EUKARYOTIC TRANSLATION INITIATION FACTOR 3 EIF3 -RELATED"/>
    <property type="match status" value="1"/>
</dbReference>
<dbReference type="PANTHER" id="PTHR14068:SF0">
    <property type="entry name" value="EUKARYOTIC TRANSLATION INITIATION FACTOR 3 SUBUNIT B"/>
    <property type="match status" value="1"/>
</dbReference>
<dbReference type="Pfam" id="PF08662">
    <property type="entry name" value="eIF2A"/>
    <property type="match status" value="1"/>
</dbReference>
<dbReference type="Pfam" id="PF00076">
    <property type="entry name" value="RRM_1"/>
    <property type="match status" value="1"/>
</dbReference>
<dbReference type="PIRSF" id="PIRSF036424">
    <property type="entry name" value="eIF3b"/>
    <property type="match status" value="1"/>
</dbReference>
<dbReference type="SUPFAM" id="SSF82171">
    <property type="entry name" value="DPP6 N-terminal domain-like"/>
    <property type="match status" value="1"/>
</dbReference>
<dbReference type="SUPFAM" id="SSF54928">
    <property type="entry name" value="RNA-binding domain, RBD"/>
    <property type="match status" value="1"/>
</dbReference>
<dbReference type="PROSITE" id="PS50102">
    <property type="entry name" value="RRM"/>
    <property type="match status" value="1"/>
</dbReference>
<name>EIF3B_CRYNB</name>
<comment type="function">
    <text evidence="1">RNA-binding component of the eukaryotic translation initiation factor 3 (eIF-3) complex, which is involved in protein synthesis of a specialized repertoire of mRNAs and, together with other initiation factors, stimulates binding of mRNA and methionyl-tRNAi to the 40S ribosome. The eIF-3 complex specifically targets and initiates translation of a subset of mRNAs involved in cell proliferation.</text>
</comment>
<comment type="subunit">
    <text evidence="1">Component of the eukaryotic translation initiation factor 3 (eIF-3) complex.</text>
</comment>
<comment type="subcellular location">
    <subcellularLocation>
        <location evidence="1">Cytoplasm</location>
    </subcellularLocation>
</comment>
<comment type="similarity">
    <text evidence="1">Belongs to the eIF-3 subunit B family.</text>
</comment>